<feature type="chain" id="PRO_0000069516" description="G-protein coupled receptor 6">
    <location>
        <begin position="1"/>
        <end position="363"/>
    </location>
</feature>
<feature type="topological domain" description="Extracellular" evidence="2">
    <location>
        <begin position="1"/>
        <end position="75"/>
    </location>
</feature>
<feature type="transmembrane region" description="Helical; Name=1" evidence="2">
    <location>
        <begin position="76"/>
        <end position="95"/>
    </location>
</feature>
<feature type="topological domain" description="Cytoplasmic" evidence="2">
    <location>
        <begin position="96"/>
        <end position="107"/>
    </location>
</feature>
<feature type="transmembrane region" description="Helical; Name=2" evidence="2">
    <location>
        <begin position="108"/>
        <end position="131"/>
    </location>
</feature>
<feature type="topological domain" description="Extracellular" evidence="2">
    <location>
        <begin position="132"/>
        <end position="143"/>
    </location>
</feature>
<feature type="transmembrane region" description="Helical; Name=3" evidence="2">
    <location>
        <begin position="144"/>
        <end position="165"/>
    </location>
</feature>
<feature type="topological domain" description="Cytoplasmic" evidence="2">
    <location>
        <begin position="166"/>
        <end position="186"/>
    </location>
</feature>
<feature type="transmembrane region" description="Helical; Name=4" evidence="2">
    <location>
        <begin position="187"/>
        <end position="206"/>
    </location>
</feature>
<feature type="topological domain" description="Extracellular" evidence="2">
    <location>
        <begin position="207"/>
        <end position="231"/>
    </location>
</feature>
<feature type="transmembrane region" description="Helical; Name=5" evidence="2">
    <location>
        <begin position="232"/>
        <end position="250"/>
    </location>
</feature>
<feature type="topological domain" description="Cytoplasmic" evidence="2">
    <location>
        <begin position="251"/>
        <end position="278"/>
    </location>
</feature>
<feature type="transmembrane region" description="Helical; Name=6" evidence="2">
    <location>
        <begin position="279"/>
        <end position="305"/>
    </location>
</feature>
<feature type="topological domain" description="Extracellular" evidence="2">
    <location>
        <begin position="306"/>
        <end position="310"/>
    </location>
</feature>
<feature type="transmembrane region" description="Helical; Name=7" evidence="2">
    <location>
        <begin position="311"/>
        <end position="332"/>
    </location>
</feature>
<feature type="topological domain" description="Cytoplasmic" evidence="2">
    <location>
        <begin position="333"/>
        <end position="363"/>
    </location>
</feature>
<feature type="region of interest" description="Disordered" evidence="4">
    <location>
        <begin position="28"/>
        <end position="51"/>
    </location>
</feature>
<feature type="modified residue" description="Phosphoserine" evidence="2">
    <location>
        <position position="357"/>
    </location>
</feature>
<feature type="modified residue" description="Phosphoserine" evidence="2">
    <location>
        <position position="359"/>
    </location>
</feature>
<feature type="modified residue" description="Phosphoserine" evidence="2">
    <location>
        <position position="361"/>
    </location>
</feature>
<feature type="lipid moiety-binding region" description="S-palmitoyl cysteine" evidence="1">
    <location>
        <position position="346"/>
    </location>
</feature>
<feature type="glycosylation site" description="N-linked (GlcNAc...) asparagine" evidence="2">
    <location>
        <position position="2"/>
    </location>
</feature>
<feature type="glycosylation site" description="N-linked (GlcNAc...) asparagine" evidence="2">
    <location>
        <position position="9"/>
    </location>
</feature>
<feature type="glycosylation site" description="N-linked (GlcNAc...) asparagine" evidence="2">
    <location>
        <position position="52"/>
    </location>
</feature>
<sequence length="363" mass="38115">MNASAAALNESQVVAVAAEGAAAAATAAGTPDTSEWGPPAASAALGGGGGPNGSLELSSQLPAGPSGLLLSAVNPWDVLLCVSGTVIAGENALVVALIASTPALRTPMFVLVGSLATADLLAGCGLILHFVFQYVVPSETVSLLMVGFLVASFAASVSSLLAITVDRYLSLYNALTYYSRRTLLGVHLLLAATWTVSLGLGLLPVLGWNCLADRASCSVVRPLTRSHVALLSTSFFVVFGIMLHLYVRICQVVWRHAHQIALQQHCLAPPHLAATRKGVGTLAVVLGTFGASWLPFAIYCVVGSQEDPAIYTYATLLPATYNSMINPIIYAFRNQEIQRALWLLFCGCFQSKVPFRSRSPSEV</sequence>
<keyword id="KW-1003">Cell membrane</keyword>
<keyword id="KW-0297">G-protein coupled receptor</keyword>
<keyword id="KW-0325">Glycoprotein</keyword>
<keyword id="KW-0449">Lipoprotein</keyword>
<keyword id="KW-0472">Membrane</keyword>
<keyword id="KW-0564">Palmitate</keyword>
<keyword id="KW-0597">Phosphoprotein</keyword>
<keyword id="KW-0675">Receptor</keyword>
<keyword id="KW-1185">Reference proteome</keyword>
<keyword id="KW-0807">Transducer</keyword>
<keyword id="KW-0812">Transmembrane</keyword>
<keyword id="KW-1133">Transmembrane helix</keyword>
<accession>P51651</accession>
<protein>
    <recommendedName>
        <fullName>G-protein coupled receptor 6</fullName>
    </recommendedName>
    <alternativeName>
        <fullName>Sphingosine 1-phosphate receptor GPR6</fullName>
    </alternativeName>
</protein>
<name>GPR6_RAT</name>
<dbReference type="EMBL" id="U12006">
    <property type="protein sequence ID" value="AAA21870.1"/>
    <property type="molecule type" value="mRNA"/>
</dbReference>
<dbReference type="EMBL" id="AF064706">
    <property type="protein sequence ID" value="AAC16886.1"/>
    <property type="molecule type" value="mRNA"/>
</dbReference>
<dbReference type="PIR" id="S48697">
    <property type="entry name" value="S48697"/>
</dbReference>
<dbReference type="RefSeq" id="NP_113994.1">
    <property type="nucleotide sequence ID" value="NM_031806.2"/>
</dbReference>
<dbReference type="SMR" id="P51651"/>
<dbReference type="FunCoup" id="P51651">
    <property type="interactions" value="127"/>
</dbReference>
<dbReference type="STRING" id="10116.ENSRNOP00000067254"/>
<dbReference type="GlyCosmos" id="P51651">
    <property type="glycosylation" value="3 sites, No reported glycans"/>
</dbReference>
<dbReference type="GlyGen" id="P51651">
    <property type="glycosylation" value="3 sites"/>
</dbReference>
<dbReference type="iPTMnet" id="P51651"/>
<dbReference type="PhosphoSitePlus" id="P51651"/>
<dbReference type="PaxDb" id="10116-ENSRNOP00000067254"/>
<dbReference type="Ensembl" id="ENSRNOT00000073276.2">
    <property type="protein sequence ID" value="ENSRNOP00000067254.1"/>
    <property type="gene ID" value="ENSRNOG00000049580.2"/>
</dbReference>
<dbReference type="GeneID" id="83683"/>
<dbReference type="KEGG" id="rno:83683"/>
<dbReference type="AGR" id="RGD:70939"/>
<dbReference type="CTD" id="2830"/>
<dbReference type="RGD" id="70939">
    <property type="gene designation" value="Gpr6"/>
</dbReference>
<dbReference type="eggNOG" id="KOG3656">
    <property type="taxonomic scope" value="Eukaryota"/>
</dbReference>
<dbReference type="GeneTree" id="ENSGT01110000267224"/>
<dbReference type="HOGENOM" id="CLU_065071_0_0_1"/>
<dbReference type="InParanoid" id="P51651"/>
<dbReference type="OMA" id="YCVVGDP"/>
<dbReference type="OrthoDB" id="10042731at2759"/>
<dbReference type="PhylomeDB" id="P51651"/>
<dbReference type="PRO" id="PR:P51651"/>
<dbReference type="Proteomes" id="UP000002494">
    <property type="component" value="Chromosome 20"/>
</dbReference>
<dbReference type="Bgee" id="ENSRNOG00000049580">
    <property type="expression patterns" value="Expressed in duodenum and 4 other cell types or tissues"/>
</dbReference>
<dbReference type="GO" id="GO:0005737">
    <property type="term" value="C:cytoplasm"/>
    <property type="evidence" value="ECO:0000318"/>
    <property type="project" value="GO_Central"/>
</dbReference>
<dbReference type="GO" id="GO:0005886">
    <property type="term" value="C:plasma membrane"/>
    <property type="evidence" value="ECO:0000318"/>
    <property type="project" value="GO_Central"/>
</dbReference>
<dbReference type="GO" id="GO:0038036">
    <property type="term" value="F:sphingosine-1-phosphate receptor activity"/>
    <property type="evidence" value="ECO:0000266"/>
    <property type="project" value="RGD"/>
</dbReference>
<dbReference type="GO" id="GO:0007189">
    <property type="term" value="P:adenylate cyclase-activating G protein-coupled receptor signaling pathway"/>
    <property type="evidence" value="ECO:0000318"/>
    <property type="project" value="GO_Central"/>
</dbReference>
<dbReference type="GO" id="GO:0007186">
    <property type="term" value="P:G protein-coupled receptor signaling pathway"/>
    <property type="evidence" value="ECO:0000304"/>
    <property type="project" value="RGD"/>
</dbReference>
<dbReference type="GO" id="GO:0007204">
    <property type="term" value="P:positive regulation of cytosolic calcium ion concentration"/>
    <property type="evidence" value="ECO:0000266"/>
    <property type="project" value="RGD"/>
</dbReference>
<dbReference type="GO" id="GO:0019222">
    <property type="term" value="P:regulation of metabolic process"/>
    <property type="evidence" value="ECO:0000318"/>
    <property type="project" value="GO_Central"/>
</dbReference>
<dbReference type="FunFam" id="1.20.1070.10:FF:000067">
    <property type="entry name" value="G-protein coupled receptor 12"/>
    <property type="match status" value="1"/>
</dbReference>
<dbReference type="Gene3D" id="1.20.1070.10">
    <property type="entry name" value="Rhodopsin 7-helix transmembrane proteins"/>
    <property type="match status" value="1"/>
</dbReference>
<dbReference type="InterPro" id="IPR000276">
    <property type="entry name" value="GPCR_Rhodpsn"/>
</dbReference>
<dbReference type="InterPro" id="IPR017452">
    <property type="entry name" value="GPCR_Rhodpsn_7TM"/>
</dbReference>
<dbReference type="InterPro" id="IPR001151">
    <property type="entry name" value="GPR6"/>
</dbReference>
<dbReference type="InterPro" id="IPR000723">
    <property type="entry name" value="GPR_3/6/12_orphan"/>
</dbReference>
<dbReference type="PANTHER" id="PTHR22750">
    <property type="entry name" value="G-PROTEIN COUPLED RECEPTOR"/>
    <property type="match status" value="1"/>
</dbReference>
<dbReference type="Pfam" id="PF00001">
    <property type="entry name" value="7tm_1"/>
    <property type="match status" value="1"/>
</dbReference>
<dbReference type="PRINTS" id="PR00237">
    <property type="entry name" value="GPCRRHODOPSN"/>
</dbReference>
<dbReference type="PRINTS" id="PR00649">
    <property type="entry name" value="GPR6ORPHANR"/>
</dbReference>
<dbReference type="PRINTS" id="PR00644">
    <property type="entry name" value="GPRORPHANR"/>
</dbReference>
<dbReference type="SMART" id="SM01381">
    <property type="entry name" value="7TM_GPCR_Srsx"/>
    <property type="match status" value="1"/>
</dbReference>
<dbReference type="SUPFAM" id="SSF81321">
    <property type="entry name" value="Family A G protein-coupled receptor-like"/>
    <property type="match status" value="1"/>
</dbReference>
<dbReference type="PROSITE" id="PS00237">
    <property type="entry name" value="G_PROTEIN_RECEP_F1_1"/>
    <property type="match status" value="1"/>
</dbReference>
<dbReference type="PROSITE" id="PS50262">
    <property type="entry name" value="G_PROTEIN_RECEP_F1_2"/>
    <property type="match status" value="1"/>
</dbReference>
<comment type="function">
    <text evidence="5">Orphan receptor with constitutive G(s) signaling activity that activate cyclic AMP. Promotes neurite outgrowth and blocks myelin inhibition in neurons.</text>
</comment>
<comment type="subcellular location">
    <subcellularLocation>
        <location evidence="7">Cell membrane</location>
        <topology evidence="7">Multi-pass membrane protein</topology>
    </subcellularLocation>
    <text evidence="1">Detected in the intracellular compartments. It is currently unclear whether this is a cell surface or intracellular receptor (By similarity).</text>
</comment>
<comment type="tissue specificity">
    <text evidence="6">Expressed in the brain, with a prominent distribution in striatum.</text>
</comment>
<comment type="developmental stage">
    <text evidence="5">Abundantly expressed in granule neurons at all developmental stages.</text>
</comment>
<comment type="similarity">
    <text evidence="3">Belongs to the G-protein coupled receptor 1 family.</text>
</comment>
<gene>
    <name type="primary">Gpr6</name>
    <name type="synonym">Cnl3</name>
</gene>
<reference key="1">
    <citation type="journal article" date="1994" name="FEBS Lett.">
        <title>Molecular cloning of a novel candidate G protein-coupled receptor from rat brain.</title>
        <authorList>
            <person name="Song Z.-H."/>
            <person name="Young W.S. III"/>
            <person name="Brownstein M.J."/>
            <person name="Bonner T.I."/>
        </authorList>
    </citation>
    <scope>NUCLEOTIDE SEQUENCE [MRNA]</scope>
    <scope>TISSUE SPECIFICITY</scope>
    <source>
        <tissue>Brain cortex</tissue>
    </source>
</reference>
<reference key="2">
    <citation type="journal article" date="2001" name="J. Neurobiol.">
        <title>Temporally and spatially regulated expression of a candidate G-protein-coupled receptor during cerebral cortical development.</title>
        <authorList>
            <person name="Chenn A."/>
            <person name="Levin M.E."/>
            <person name="McConnell S.K."/>
        </authorList>
    </citation>
    <scope>NUCLEOTIDE SEQUENCE [MRNA]</scope>
    <source>
        <tissue>Brain</tissue>
    </source>
</reference>
<reference key="3">
    <citation type="journal article" date="2007" name="J. Biol. Chem.">
        <title>Neural expression of G protein-coupled receptors GPR3, GPR6, and GPR12 up-regulates cyclic AMP levels and promotes neurite outgrowth.</title>
        <authorList>
            <person name="Tanaka S."/>
            <person name="Ishii K."/>
            <person name="Kasai K."/>
            <person name="Yoon S.O."/>
            <person name="Saeki Y."/>
        </authorList>
    </citation>
    <scope>FUNCTION</scope>
    <scope>DEVELOPMENTAL STAGE</scope>
</reference>
<proteinExistence type="evidence at transcript level"/>
<evidence type="ECO:0000250" key="1"/>
<evidence type="ECO:0000255" key="2"/>
<evidence type="ECO:0000255" key="3">
    <source>
        <dbReference type="PROSITE-ProRule" id="PRU00521"/>
    </source>
</evidence>
<evidence type="ECO:0000256" key="4">
    <source>
        <dbReference type="SAM" id="MobiDB-lite"/>
    </source>
</evidence>
<evidence type="ECO:0000269" key="5">
    <source>
    </source>
</evidence>
<evidence type="ECO:0000269" key="6">
    <source>
    </source>
</evidence>
<evidence type="ECO:0000305" key="7"/>
<organism>
    <name type="scientific">Rattus norvegicus</name>
    <name type="common">Rat</name>
    <dbReference type="NCBI Taxonomy" id="10116"/>
    <lineage>
        <taxon>Eukaryota</taxon>
        <taxon>Metazoa</taxon>
        <taxon>Chordata</taxon>
        <taxon>Craniata</taxon>
        <taxon>Vertebrata</taxon>
        <taxon>Euteleostomi</taxon>
        <taxon>Mammalia</taxon>
        <taxon>Eutheria</taxon>
        <taxon>Euarchontoglires</taxon>
        <taxon>Glires</taxon>
        <taxon>Rodentia</taxon>
        <taxon>Myomorpha</taxon>
        <taxon>Muroidea</taxon>
        <taxon>Muridae</taxon>
        <taxon>Murinae</taxon>
        <taxon>Rattus</taxon>
    </lineage>
</organism>